<dbReference type="EMBL" id="CR858597">
    <property type="protein sequence ID" value="CAH90819.1"/>
    <property type="molecule type" value="mRNA"/>
</dbReference>
<dbReference type="RefSeq" id="NP_001125467.1">
    <property type="nucleotide sequence ID" value="NM_001131995.1"/>
</dbReference>
<dbReference type="SMR" id="Q5RBP1"/>
<dbReference type="FunCoup" id="Q5RBP1">
    <property type="interactions" value="159"/>
</dbReference>
<dbReference type="STRING" id="9601.ENSPPYP00000016729"/>
<dbReference type="GeneID" id="100172375"/>
<dbReference type="KEGG" id="pon:100172375"/>
<dbReference type="CTD" id="255743"/>
<dbReference type="eggNOG" id="KOG1217">
    <property type="taxonomic scope" value="Eukaryota"/>
</dbReference>
<dbReference type="InParanoid" id="Q5RBP1"/>
<dbReference type="OrthoDB" id="10060424at2759"/>
<dbReference type="Proteomes" id="UP000001595">
    <property type="component" value="Unplaced"/>
</dbReference>
<dbReference type="GO" id="GO:0005576">
    <property type="term" value="C:extracellular region"/>
    <property type="evidence" value="ECO:0007669"/>
    <property type="project" value="UniProtKB-KW"/>
</dbReference>
<dbReference type="GO" id="GO:0016020">
    <property type="term" value="C:membrane"/>
    <property type="evidence" value="ECO:0007669"/>
    <property type="project" value="InterPro"/>
</dbReference>
<dbReference type="GO" id="GO:0005509">
    <property type="term" value="F:calcium ion binding"/>
    <property type="evidence" value="ECO:0007669"/>
    <property type="project" value="InterPro"/>
</dbReference>
<dbReference type="GO" id="GO:0007155">
    <property type="term" value="P:cell adhesion"/>
    <property type="evidence" value="ECO:0007669"/>
    <property type="project" value="UniProtKB-KW"/>
</dbReference>
<dbReference type="GO" id="GO:0030154">
    <property type="term" value="P:cell differentiation"/>
    <property type="evidence" value="ECO:0007669"/>
    <property type="project" value="UniProtKB-KW"/>
</dbReference>
<dbReference type="CDD" id="cd00054">
    <property type="entry name" value="EGF_CA"/>
    <property type="match status" value="1"/>
</dbReference>
<dbReference type="CDD" id="cd06263">
    <property type="entry name" value="MAM"/>
    <property type="match status" value="1"/>
</dbReference>
<dbReference type="FunFam" id="2.10.25.10:FF:000038">
    <property type="entry name" value="Fibrillin 2"/>
    <property type="match status" value="1"/>
</dbReference>
<dbReference type="FunFam" id="2.10.25.10:FF:000187">
    <property type="entry name" value="nephronectin isoform X1"/>
    <property type="match status" value="1"/>
</dbReference>
<dbReference type="FunFam" id="2.10.25.10:FF:000476">
    <property type="entry name" value="nephronectin isoform X1"/>
    <property type="match status" value="1"/>
</dbReference>
<dbReference type="FunFam" id="2.60.120.200:FF:000133">
    <property type="entry name" value="nephronectin isoform X1"/>
    <property type="match status" value="1"/>
</dbReference>
<dbReference type="FunFam" id="2.10.25.10:FF:000184">
    <property type="entry name" value="nephronectin isoform X2"/>
    <property type="match status" value="1"/>
</dbReference>
<dbReference type="FunFam" id="2.10.25.10:FF:000268">
    <property type="entry name" value="nephronectin isoform X2"/>
    <property type="match status" value="1"/>
</dbReference>
<dbReference type="Gene3D" id="2.60.120.200">
    <property type="match status" value="1"/>
</dbReference>
<dbReference type="Gene3D" id="2.10.25.10">
    <property type="entry name" value="Laminin"/>
    <property type="match status" value="5"/>
</dbReference>
<dbReference type="InterPro" id="IPR013320">
    <property type="entry name" value="ConA-like_dom_sf"/>
</dbReference>
<dbReference type="InterPro" id="IPR001881">
    <property type="entry name" value="EGF-like_Ca-bd_dom"/>
</dbReference>
<dbReference type="InterPro" id="IPR000742">
    <property type="entry name" value="EGF-like_dom"/>
</dbReference>
<dbReference type="InterPro" id="IPR000152">
    <property type="entry name" value="EGF-type_Asp/Asn_hydroxyl_site"/>
</dbReference>
<dbReference type="InterPro" id="IPR018097">
    <property type="entry name" value="EGF_Ca-bd_CS"/>
</dbReference>
<dbReference type="InterPro" id="IPR024731">
    <property type="entry name" value="EGF_dom"/>
</dbReference>
<dbReference type="InterPro" id="IPR009030">
    <property type="entry name" value="Growth_fac_rcpt_cys_sf"/>
</dbReference>
<dbReference type="InterPro" id="IPR000998">
    <property type="entry name" value="MAM_dom"/>
</dbReference>
<dbReference type="InterPro" id="IPR052235">
    <property type="entry name" value="Nephronectin_domain"/>
</dbReference>
<dbReference type="InterPro" id="IPR049883">
    <property type="entry name" value="NOTCH1_EGF-like"/>
</dbReference>
<dbReference type="PANTHER" id="PTHR24050:SF19">
    <property type="entry name" value="NEPHRONECTIN"/>
    <property type="match status" value="1"/>
</dbReference>
<dbReference type="PANTHER" id="PTHR24050">
    <property type="entry name" value="PA14 DOMAIN-CONTAINING PROTEIN"/>
    <property type="match status" value="1"/>
</dbReference>
<dbReference type="Pfam" id="PF12947">
    <property type="entry name" value="EGF_3"/>
    <property type="match status" value="1"/>
</dbReference>
<dbReference type="Pfam" id="PF07645">
    <property type="entry name" value="EGF_CA"/>
    <property type="match status" value="2"/>
</dbReference>
<dbReference type="Pfam" id="PF00629">
    <property type="entry name" value="MAM"/>
    <property type="match status" value="1"/>
</dbReference>
<dbReference type="SMART" id="SM00181">
    <property type="entry name" value="EGF"/>
    <property type="match status" value="5"/>
</dbReference>
<dbReference type="SMART" id="SM00179">
    <property type="entry name" value="EGF_CA"/>
    <property type="match status" value="3"/>
</dbReference>
<dbReference type="SMART" id="SM00137">
    <property type="entry name" value="MAM"/>
    <property type="match status" value="1"/>
</dbReference>
<dbReference type="SUPFAM" id="SSF49899">
    <property type="entry name" value="Concanavalin A-like lectins/glucanases"/>
    <property type="match status" value="1"/>
</dbReference>
<dbReference type="SUPFAM" id="SSF57184">
    <property type="entry name" value="Growth factor receptor domain"/>
    <property type="match status" value="2"/>
</dbReference>
<dbReference type="PROSITE" id="PS00010">
    <property type="entry name" value="ASX_HYDROXYL"/>
    <property type="match status" value="3"/>
</dbReference>
<dbReference type="PROSITE" id="PS00022">
    <property type="entry name" value="EGF_1"/>
    <property type="match status" value="1"/>
</dbReference>
<dbReference type="PROSITE" id="PS01186">
    <property type="entry name" value="EGF_2"/>
    <property type="match status" value="3"/>
</dbReference>
<dbReference type="PROSITE" id="PS50026">
    <property type="entry name" value="EGF_3"/>
    <property type="match status" value="4"/>
</dbReference>
<dbReference type="PROSITE" id="PS01187">
    <property type="entry name" value="EGF_CA"/>
    <property type="match status" value="3"/>
</dbReference>
<dbReference type="PROSITE" id="PS50060">
    <property type="entry name" value="MAM_2"/>
    <property type="match status" value="1"/>
</dbReference>
<protein>
    <recommendedName>
        <fullName>Nephronectin</fullName>
    </recommendedName>
</protein>
<accession>Q5RBP1</accession>
<comment type="function">
    <text evidence="1">Functional ligand of integrin alpha-8/beta-1 in kidney development. Regulates the expression of GDNF with integrin alpha-8/beta-1 which is essential for kidney development. May also play a role in the development and function of various tissues, regulating cell adhesion, spreading and survival through the binding of several integrins (By similarity).</text>
</comment>
<comment type="subunit">
    <text evidence="1">Homodimer and homotrimer.</text>
</comment>
<comment type="subcellular location">
    <subcellularLocation>
        <location evidence="1">Secreted</location>
        <location evidence="1">Extracellular space</location>
        <location evidence="1">Extracellular matrix</location>
    </subcellularLocation>
    <text evidence="1">Trapped on the cell surface or in the extracellular matrix.</text>
</comment>
<comment type="domain">
    <text evidence="1">The MAM domain is required for localization at the cell surface.</text>
</comment>
<comment type="similarity">
    <text evidence="6">Belongs to the nephronectin family.</text>
</comment>
<feature type="signal peptide" evidence="2">
    <location>
        <begin position="1"/>
        <end position="19"/>
    </location>
</feature>
<feature type="chain" id="PRO_0000295686" description="Nephronectin">
    <location>
        <begin position="20"/>
        <end position="565"/>
    </location>
</feature>
<feature type="domain" description="EGF-like 1" evidence="3">
    <location>
        <begin position="52"/>
        <end position="87"/>
    </location>
</feature>
<feature type="domain" description="EGF-like 2; calcium-binding" evidence="3">
    <location>
        <begin position="89"/>
        <end position="128"/>
    </location>
</feature>
<feature type="domain" description="EGF-like 3" evidence="3">
    <location>
        <begin position="132"/>
        <end position="168"/>
    </location>
</feature>
<feature type="domain" description="EGF-like 4; calcium-binding" evidence="3">
    <location>
        <begin position="169"/>
        <end position="213"/>
    </location>
</feature>
<feature type="domain" description="EGF-like 5; calcium-binding" evidence="3">
    <location>
        <begin position="214"/>
        <end position="254"/>
    </location>
</feature>
<feature type="domain" description="MAM" evidence="4">
    <location>
        <begin position="420"/>
        <end position="563"/>
    </location>
</feature>
<feature type="region of interest" description="Disordered" evidence="5">
    <location>
        <begin position="301"/>
        <end position="373"/>
    </location>
</feature>
<feature type="short sequence motif" description="Integrin interaction">
    <location>
        <begin position="382"/>
        <end position="384"/>
    </location>
</feature>
<feature type="compositionally biased region" description="Low complexity" evidence="5">
    <location>
        <begin position="304"/>
        <end position="316"/>
    </location>
</feature>
<feature type="compositionally biased region" description="Pro residues" evidence="5">
    <location>
        <begin position="317"/>
        <end position="349"/>
    </location>
</feature>
<feature type="disulfide bond" evidence="3">
    <location>
        <begin position="56"/>
        <end position="69"/>
    </location>
</feature>
<feature type="disulfide bond" evidence="3">
    <location>
        <begin position="60"/>
        <end position="75"/>
    </location>
</feature>
<feature type="disulfide bond" evidence="3">
    <location>
        <begin position="77"/>
        <end position="86"/>
    </location>
</feature>
<feature type="disulfide bond" evidence="3">
    <location>
        <begin position="93"/>
        <end position="104"/>
    </location>
</feature>
<feature type="disulfide bond" evidence="3">
    <location>
        <begin position="100"/>
        <end position="113"/>
    </location>
</feature>
<feature type="disulfide bond" evidence="3">
    <location>
        <begin position="115"/>
        <end position="127"/>
    </location>
</feature>
<feature type="disulfide bond" evidence="3">
    <location>
        <begin position="173"/>
        <end position="186"/>
    </location>
</feature>
<feature type="disulfide bond" evidence="3">
    <location>
        <begin position="180"/>
        <end position="195"/>
    </location>
</feature>
<feature type="disulfide bond" evidence="3">
    <location>
        <begin position="197"/>
        <end position="212"/>
    </location>
</feature>
<feature type="disulfide bond" evidence="3">
    <location>
        <begin position="218"/>
        <end position="231"/>
    </location>
</feature>
<feature type="disulfide bond" evidence="3">
    <location>
        <begin position="225"/>
        <end position="240"/>
    </location>
</feature>
<feature type="disulfide bond" evidence="3">
    <location>
        <begin position="242"/>
        <end position="253"/>
    </location>
</feature>
<organism>
    <name type="scientific">Pongo abelii</name>
    <name type="common">Sumatran orangutan</name>
    <name type="synonym">Pongo pygmaeus abelii</name>
    <dbReference type="NCBI Taxonomy" id="9601"/>
    <lineage>
        <taxon>Eukaryota</taxon>
        <taxon>Metazoa</taxon>
        <taxon>Chordata</taxon>
        <taxon>Craniata</taxon>
        <taxon>Vertebrata</taxon>
        <taxon>Euteleostomi</taxon>
        <taxon>Mammalia</taxon>
        <taxon>Eutheria</taxon>
        <taxon>Euarchontoglires</taxon>
        <taxon>Primates</taxon>
        <taxon>Haplorrhini</taxon>
        <taxon>Catarrhini</taxon>
        <taxon>Hominidae</taxon>
        <taxon>Pongo</taxon>
    </lineage>
</organism>
<proteinExistence type="evidence at transcript level"/>
<gene>
    <name type="primary">NPNT</name>
</gene>
<evidence type="ECO:0000250" key="1"/>
<evidence type="ECO:0000255" key="2"/>
<evidence type="ECO:0000255" key="3">
    <source>
        <dbReference type="PROSITE-ProRule" id="PRU00076"/>
    </source>
</evidence>
<evidence type="ECO:0000255" key="4">
    <source>
        <dbReference type="PROSITE-ProRule" id="PRU00128"/>
    </source>
</evidence>
<evidence type="ECO:0000256" key="5">
    <source>
        <dbReference type="SAM" id="MobiDB-lite"/>
    </source>
</evidence>
<evidence type="ECO:0000305" key="6"/>
<name>NPNT_PONAB</name>
<keyword id="KW-0106">Calcium</keyword>
<keyword id="KW-0130">Cell adhesion</keyword>
<keyword id="KW-0217">Developmental protein</keyword>
<keyword id="KW-0221">Differentiation</keyword>
<keyword id="KW-1015">Disulfide bond</keyword>
<keyword id="KW-0245">EGF-like domain</keyword>
<keyword id="KW-0272">Extracellular matrix</keyword>
<keyword id="KW-1185">Reference proteome</keyword>
<keyword id="KW-0677">Repeat</keyword>
<keyword id="KW-0964">Secreted</keyword>
<keyword id="KW-0732">Signal</keyword>
<reference key="1">
    <citation type="submission" date="2004-11" db="EMBL/GenBank/DDBJ databases">
        <authorList>
            <consortium name="The German cDNA consortium"/>
        </authorList>
    </citation>
    <scope>NUCLEOTIDE SEQUENCE [LARGE SCALE MRNA]</scope>
    <source>
        <tissue>Kidney</tissue>
    </source>
</reference>
<sequence>MDFLLALVLVSSLYLQAAAEFDGRWPRQIVSSIGLCRYGGRIDCCWGWARQSWGQCQPVCQPRCKHGECIGPNKCKCHPGYAGKTCNQDLNECGLKPRPCKHRCMNTYGSYKCYCLNGYMLMPDGSCSSALTCSMANCQYGCDVVKGQIRCQCPSPGLQLAPDGRTCVDVDECATGRASCPRFRQCVNTFGSYICKCHKGFNLMYIGGKYQCHDIDECSLGQYQCSSFARCYNIHGSYKCKCKEGYQGDGLTCVYIPKVMIEPSGPIHVPKGNGTILKGDRGHNNWIPDVGSTWWPPKTPYIPPIITNRPTSKPTTRPTPKPTPIPTPPPPPPLPTELRTPLPPTTPERPTPRLTSIAPAAGTPPGGITVDNRVQTDPQKLRGDVFIPRQPSNDLFEIFEIERGVSADDEAKDDPGILVHSCNFDHGLCGWIREKDNDLHWEPIRDPAGGQYLTVSAAKAPGGKAARLVLPLGRLMHSGDLCLSFRHKVTGLHSGTLQVFVRKHGAHGAALWGRNGGHGWRQTQITLRGADIKSVIFKGEKRRGHTGEIGLDDVSLKKGHCSEER</sequence>